<reference key="1">
    <citation type="journal article" date="2000" name="Mol. Biol. Cell">
        <title>Mechanisms of sod2 gene amplification in Schizosaccharomyces pombe.</title>
        <authorList>
            <person name="Albrecht E.B."/>
            <person name="Hunyady A.B."/>
            <person name="Stark G.R."/>
            <person name="Patterson T.E."/>
        </authorList>
    </citation>
    <scope>NUCLEOTIDE SEQUENCE [GENOMIC DNA]</scope>
</reference>
<reference key="2">
    <citation type="journal article" date="2002" name="Nature">
        <title>The genome sequence of Schizosaccharomyces pombe.</title>
        <authorList>
            <person name="Wood V."/>
            <person name="Gwilliam R."/>
            <person name="Rajandream M.A."/>
            <person name="Lyne M.H."/>
            <person name="Lyne R."/>
            <person name="Stewart A."/>
            <person name="Sgouros J.G."/>
            <person name="Peat N."/>
            <person name="Hayles J."/>
            <person name="Baker S.G."/>
            <person name="Basham D."/>
            <person name="Bowman S."/>
            <person name="Brooks K."/>
            <person name="Brown D."/>
            <person name="Brown S."/>
            <person name="Chillingworth T."/>
            <person name="Churcher C.M."/>
            <person name="Collins M."/>
            <person name="Connor R."/>
            <person name="Cronin A."/>
            <person name="Davis P."/>
            <person name="Feltwell T."/>
            <person name="Fraser A."/>
            <person name="Gentles S."/>
            <person name="Goble A."/>
            <person name="Hamlin N."/>
            <person name="Harris D.E."/>
            <person name="Hidalgo J."/>
            <person name="Hodgson G."/>
            <person name="Holroyd S."/>
            <person name="Hornsby T."/>
            <person name="Howarth S."/>
            <person name="Huckle E.J."/>
            <person name="Hunt S."/>
            <person name="Jagels K."/>
            <person name="James K.D."/>
            <person name="Jones L."/>
            <person name="Jones M."/>
            <person name="Leather S."/>
            <person name="McDonald S."/>
            <person name="McLean J."/>
            <person name="Mooney P."/>
            <person name="Moule S."/>
            <person name="Mungall K.L."/>
            <person name="Murphy L.D."/>
            <person name="Niblett D."/>
            <person name="Odell C."/>
            <person name="Oliver K."/>
            <person name="O'Neil S."/>
            <person name="Pearson D."/>
            <person name="Quail M.A."/>
            <person name="Rabbinowitsch E."/>
            <person name="Rutherford K.M."/>
            <person name="Rutter S."/>
            <person name="Saunders D."/>
            <person name="Seeger K."/>
            <person name="Sharp S."/>
            <person name="Skelton J."/>
            <person name="Simmonds M.N."/>
            <person name="Squares R."/>
            <person name="Squares S."/>
            <person name="Stevens K."/>
            <person name="Taylor K."/>
            <person name="Taylor R.G."/>
            <person name="Tivey A."/>
            <person name="Walsh S.V."/>
            <person name="Warren T."/>
            <person name="Whitehead S."/>
            <person name="Woodward J.R."/>
            <person name="Volckaert G."/>
            <person name="Aert R."/>
            <person name="Robben J."/>
            <person name="Grymonprez B."/>
            <person name="Weltjens I."/>
            <person name="Vanstreels E."/>
            <person name="Rieger M."/>
            <person name="Schaefer M."/>
            <person name="Mueller-Auer S."/>
            <person name="Gabel C."/>
            <person name="Fuchs M."/>
            <person name="Duesterhoeft A."/>
            <person name="Fritzc C."/>
            <person name="Holzer E."/>
            <person name="Moestl D."/>
            <person name="Hilbert H."/>
            <person name="Borzym K."/>
            <person name="Langer I."/>
            <person name="Beck A."/>
            <person name="Lehrach H."/>
            <person name="Reinhardt R."/>
            <person name="Pohl T.M."/>
            <person name="Eger P."/>
            <person name="Zimmermann W."/>
            <person name="Wedler H."/>
            <person name="Wambutt R."/>
            <person name="Purnelle B."/>
            <person name="Goffeau A."/>
            <person name="Cadieu E."/>
            <person name="Dreano S."/>
            <person name="Gloux S."/>
            <person name="Lelaure V."/>
            <person name="Mottier S."/>
            <person name="Galibert F."/>
            <person name="Aves S.J."/>
            <person name="Xiang Z."/>
            <person name="Hunt C."/>
            <person name="Moore K."/>
            <person name="Hurst S.M."/>
            <person name="Lucas M."/>
            <person name="Rochet M."/>
            <person name="Gaillardin C."/>
            <person name="Tallada V.A."/>
            <person name="Garzon A."/>
            <person name="Thode G."/>
            <person name="Daga R.R."/>
            <person name="Cruzado L."/>
            <person name="Jimenez J."/>
            <person name="Sanchez M."/>
            <person name="del Rey F."/>
            <person name="Benito J."/>
            <person name="Dominguez A."/>
            <person name="Revuelta J.L."/>
            <person name="Moreno S."/>
            <person name="Armstrong J."/>
            <person name="Forsburg S.L."/>
            <person name="Cerutti L."/>
            <person name="Lowe T."/>
            <person name="McCombie W.R."/>
            <person name="Paulsen I."/>
            <person name="Potashkin J."/>
            <person name="Shpakovski G.V."/>
            <person name="Ussery D."/>
            <person name="Barrell B.G."/>
            <person name="Nurse P."/>
        </authorList>
    </citation>
    <scope>NUCLEOTIDE SEQUENCE [LARGE SCALE GENOMIC DNA]</scope>
    <source>
        <strain>972 / ATCC 24843</strain>
    </source>
</reference>
<dbReference type="EMBL" id="AF192974">
    <property type="protein sequence ID" value="AAF13925.1"/>
    <property type="molecule type" value="Genomic_DNA"/>
</dbReference>
<dbReference type="EMBL" id="CU329670">
    <property type="protein sequence ID" value="CAB69633.1"/>
    <property type="molecule type" value="Genomic_DNA"/>
</dbReference>
<dbReference type="PIR" id="T50283">
    <property type="entry name" value="T50283"/>
</dbReference>
<dbReference type="RefSeq" id="NP_592783.1">
    <property type="nucleotide sequence ID" value="NM_001018183.2"/>
</dbReference>
<dbReference type="SMR" id="P0CU19"/>
<dbReference type="FunCoup" id="P0CU19">
    <property type="interactions" value="52"/>
</dbReference>
<dbReference type="STRING" id="284812.P0CU19"/>
<dbReference type="GlyCosmos" id="P0CU19">
    <property type="glycosylation" value="1 site, No reported glycans"/>
</dbReference>
<dbReference type="PaxDb" id="4896-SPAC977.11.1"/>
<dbReference type="EnsemblFungi" id="SPAC977.11.1">
    <property type="protein sequence ID" value="SPAC977.11.1:pep"/>
    <property type="gene ID" value="SPAC977.11"/>
</dbReference>
<dbReference type="EnsemblFungi" id="SPBPB8B6.06c.1">
    <property type="protein sequence ID" value="SPBPB8B6.06c.1:pep"/>
    <property type="gene ID" value="SPBPB8B6.06c"/>
</dbReference>
<dbReference type="GeneID" id="2543234"/>
<dbReference type="KEGG" id="spo:2543234"/>
<dbReference type="KEGG" id="spo:3361186"/>
<dbReference type="PomBase" id="SPAC977.11">
    <property type="gene designation" value="fex1"/>
</dbReference>
<dbReference type="VEuPathDB" id="FungiDB:SPAC977.11"/>
<dbReference type="VEuPathDB" id="FungiDB:SPBPB8B6.06c"/>
<dbReference type="eggNOG" id="ENOG502QT5F">
    <property type="taxonomic scope" value="Eukaryota"/>
</dbReference>
<dbReference type="InParanoid" id="P0CU19"/>
<dbReference type="OMA" id="ADGYCGC"/>
<dbReference type="PhylomeDB" id="P0CU19"/>
<dbReference type="PRO" id="PR:P0CU19"/>
<dbReference type="Proteomes" id="UP000002485">
    <property type="component" value="Chromosome I"/>
</dbReference>
<dbReference type="GO" id="GO:0005886">
    <property type="term" value="C:plasma membrane"/>
    <property type="evidence" value="ECO:0000318"/>
    <property type="project" value="GO_Central"/>
</dbReference>
<dbReference type="GO" id="GO:1903425">
    <property type="term" value="F:fluoride transmembrane transporter activity"/>
    <property type="evidence" value="ECO:0000315"/>
    <property type="project" value="PomBase"/>
</dbReference>
<dbReference type="GO" id="GO:0140114">
    <property type="term" value="P:cellular detoxification of fluoride"/>
    <property type="evidence" value="ECO:0000315"/>
    <property type="project" value="PomBase"/>
</dbReference>
<dbReference type="GO" id="GO:0140116">
    <property type="term" value="P:fluoride export across plasma membrane"/>
    <property type="evidence" value="ECO:0000315"/>
    <property type="project" value="PomBase"/>
</dbReference>
<dbReference type="GO" id="GO:1903424">
    <property type="term" value="P:fluoride transmembrane transport"/>
    <property type="evidence" value="ECO:0000318"/>
    <property type="project" value="GO_Central"/>
</dbReference>
<dbReference type="InterPro" id="IPR003691">
    <property type="entry name" value="FluC"/>
</dbReference>
<dbReference type="PANTHER" id="PTHR28259">
    <property type="entry name" value="FLUORIDE EXPORT PROTEIN 1-RELATED"/>
    <property type="match status" value="1"/>
</dbReference>
<dbReference type="PANTHER" id="PTHR28259:SF1">
    <property type="entry name" value="FLUORIDE EXPORT PROTEIN 1-RELATED"/>
    <property type="match status" value="1"/>
</dbReference>
<dbReference type="Pfam" id="PF02537">
    <property type="entry name" value="CRCB"/>
    <property type="match status" value="2"/>
</dbReference>
<name>FEX1_SCHPO</name>
<comment type="function">
    <text evidence="1">Fluoride channel required for the rapid expulsion of cytoplasmic fluoride.</text>
</comment>
<comment type="catalytic activity">
    <reaction evidence="1">
        <text>fluoride(in) = fluoride(out)</text>
        <dbReference type="Rhea" id="RHEA:76159"/>
        <dbReference type="ChEBI" id="CHEBI:17051"/>
    </reaction>
    <physiologicalReaction direction="left-to-right" evidence="1">
        <dbReference type="Rhea" id="RHEA:76160"/>
    </physiologicalReaction>
</comment>
<comment type="subcellular location">
    <subcellularLocation>
        <location evidence="1">Cell membrane</location>
        <topology evidence="2">Multi-pass membrane protein</topology>
    </subcellularLocation>
</comment>
<comment type="similarity">
    <text evidence="4">Belongs to the fluoride channel Fluc/FEX (TC 1.A.43) family.</text>
</comment>
<feature type="chain" id="PRO_0000317096" description="Fluoride export protein 1">
    <location>
        <begin position="1"/>
        <end position="311"/>
    </location>
</feature>
<feature type="topological domain" description="Cytoplasmic" evidence="1">
    <location>
        <begin position="1"/>
        <end position="6"/>
    </location>
</feature>
<feature type="transmembrane region" description="Helical" evidence="2">
    <location>
        <begin position="7"/>
        <end position="25"/>
    </location>
</feature>
<feature type="topological domain" description="Extracellular" evidence="1">
    <location>
        <begin position="26"/>
        <end position="29"/>
    </location>
</feature>
<feature type="transmembrane region" description="Helical" evidence="2">
    <location>
        <begin position="30"/>
        <end position="50"/>
    </location>
</feature>
<feature type="topological domain" description="Cytoplasmic" evidence="1">
    <location>
        <begin position="51"/>
        <end position="65"/>
    </location>
</feature>
<feature type="transmembrane region" description="Helical" evidence="2">
    <location>
        <begin position="66"/>
        <end position="86"/>
    </location>
</feature>
<feature type="topological domain" description="Extracellular" evidence="1">
    <location>
        <begin position="87"/>
        <end position="106"/>
    </location>
</feature>
<feature type="transmembrane region" description="Helical" evidence="2">
    <location>
        <begin position="107"/>
        <end position="127"/>
    </location>
</feature>
<feature type="topological domain" description="Cytoplasmic" evidence="1">
    <location>
        <begin position="128"/>
        <end position="154"/>
    </location>
</feature>
<feature type="transmembrane region" description="Helical" evidence="2">
    <location>
        <begin position="155"/>
        <end position="175"/>
    </location>
</feature>
<feature type="topological domain" description="Extracellular" evidence="1">
    <location>
        <begin position="176"/>
        <end position="186"/>
    </location>
</feature>
<feature type="transmembrane region" description="Helical" evidence="2">
    <location>
        <begin position="187"/>
        <end position="207"/>
    </location>
</feature>
<feature type="topological domain" description="Cytoplasmic" evidence="1">
    <location>
        <begin position="208"/>
        <end position="212"/>
    </location>
</feature>
<feature type="transmembrane region" description="Helical" evidence="2">
    <location>
        <begin position="213"/>
        <end position="233"/>
    </location>
</feature>
<feature type="topological domain" description="Extracellular" evidence="1">
    <location>
        <begin position="234"/>
        <end position="250"/>
    </location>
</feature>
<feature type="transmembrane region" description="Helical" evidence="2">
    <location>
        <begin position="251"/>
        <end position="268"/>
    </location>
</feature>
<feature type="topological domain" description="Cytoplasmic" evidence="1">
    <location>
        <begin position="269"/>
        <end position="278"/>
    </location>
</feature>
<feature type="transmembrane region" description="Helical" evidence="2">
    <location>
        <begin position="279"/>
        <end position="299"/>
    </location>
</feature>
<feature type="topological domain" description="Extracellular" evidence="1">
    <location>
        <begin position="300"/>
        <end position="311"/>
    </location>
</feature>
<feature type="glycosylation site" description="N-linked (GlcNAc...) asparagine" evidence="3">
    <location>
        <position position="181"/>
    </location>
</feature>
<gene>
    <name type="primary">fex1</name>
    <name type="ORF">SPAC977.11</name>
</gene>
<evidence type="ECO:0000250" key="1">
    <source>
        <dbReference type="UniProtKB" id="Q08913"/>
    </source>
</evidence>
<evidence type="ECO:0000255" key="2"/>
<evidence type="ECO:0000255" key="3">
    <source>
        <dbReference type="PROSITE-ProRule" id="PRU00498"/>
    </source>
</evidence>
<evidence type="ECO:0000305" key="4"/>
<sequence length="311" mass="34557">MLLTQSYFCIMSMLGTLARLGLTALNTYPGAPFSGLLWVQFVGCVIMGFCQTESVFFPRPKHNATFLLAITTGFCGSLTTFSSWMLQMFTGMANLDPFERRGRGYSFLSVVSDFMVTMCIAMSSLIWGKQIGKTTGQWRIGKVAFAWPIPAHTHIVVRVLLLLLSICFFVGAAFYTAYTTNVTHRGIGFSLIFSPFAALTRLYLARFLNSPQYFIPYGTLCANVFATLLLSIMYMIPQITHCTPVSRSVMYGIQNGFCAVLSTLSTFSNELHTMPIKRAYIYCIISVAISFSICVIVDGATAWGHGYTEKY</sequence>
<proteinExistence type="inferred from homology"/>
<keyword id="KW-1003">Cell membrane</keyword>
<keyword id="KW-0325">Glycoprotein</keyword>
<keyword id="KW-0407">Ion channel</keyword>
<keyword id="KW-0406">Ion transport</keyword>
<keyword id="KW-0472">Membrane</keyword>
<keyword id="KW-1185">Reference proteome</keyword>
<keyword id="KW-0812">Transmembrane</keyword>
<keyword id="KW-1133">Transmembrane helix</keyword>
<keyword id="KW-0813">Transport</keyword>
<protein>
    <recommendedName>
        <fullName evidence="1">Fluoride export protein 1</fullName>
    </recommendedName>
</protein>
<accession>P0CU19</accession>
<accession>Q9UTS8</accession>
<organism>
    <name type="scientific">Schizosaccharomyces pombe (strain 972 / ATCC 24843)</name>
    <name type="common">Fission yeast</name>
    <dbReference type="NCBI Taxonomy" id="284812"/>
    <lineage>
        <taxon>Eukaryota</taxon>
        <taxon>Fungi</taxon>
        <taxon>Dikarya</taxon>
        <taxon>Ascomycota</taxon>
        <taxon>Taphrinomycotina</taxon>
        <taxon>Schizosaccharomycetes</taxon>
        <taxon>Schizosaccharomycetales</taxon>
        <taxon>Schizosaccharomycetaceae</taxon>
        <taxon>Schizosaccharomyces</taxon>
    </lineage>
</organism>